<organism>
    <name type="scientific">Cereibacter sphaeroides (strain ATCC 17029 / ATH 2.4.9)</name>
    <name type="common">Rhodobacter sphaeroides</name>
    <dbReference type="NCBI Taxonomy" id="349101"/>
    <lineage>
        <taxon>Bacteria</taxon>
        <taxon>Pseudomonadati</taxon>
        <taxon>Pseudomonadota</taxon>
        <taxon>Alphaproteobacteria</taxon>
        <taxon>Rhodobacterales</taxon>
        <taxon>Paracoccaceae</taxon>
        <taxon>Cereibacter</taxon>
    </lineage>
</organism>
<sequence>MKPLGRLRLGVNIDHVATVRNARGTSYPDPLRAGLLAEAAGADGITAHLREDRRHIRDEDITALMQGLRVPLNLEMATTPEMQAIALRHKPHAVCLVPERREERTTEGGIDVAGDIGRLKDFVAPLRAAGCRVSMFIGHDVRQIEASAEIGAAVVELHTGHYCDLVAEGRTAEAARELEALREGAALAHSLGLEVHAGHGISYDTVAEIAAFPQVMELNIGHFLIGEAIFRGLGSAIEGMRRRMDAAREAAA</sequence>
<feature type="chain" id="PRO_1000022401" description="Pyridoxine 5'-phosphate synthase">
    <location>
        <begin position="1"/>
        <end position="252"/>
    </location>
</feature>
<feature type="active site" description="Proton acceptor" evidence="1">
    <location>
        <position position="48"/>
    </location>
</feature>
<feature type="active site" description="Proton acceptor" evidence="1">
    <location>
        <position position="75"/>
    </location>
</feature>
<feature type="active site" description="Proton donor" evidence="1">
    <location>
        <position position="199"/>
    </location>
</feature>
<feature type="binding site" evidence="1">
    <location>
        <position position="12"/>
    </location>
    <ligand>
        <name>3-amino-2-oxopropyl phosphate</name>
        <dbReference type="ChEBI" id="CHEBI:57279"/>
    </ligand>
</feature>
<feature type="binding site" evidence="1">
    <location>
        <begin position="14"/>
        <end position="15"/>
    </location>
    <ligand>
        <name>1-deoxy-D-xylulose 5-phosphate</name>
        <dbReference type="ChEBI" id="CHEBI:57792"/>
    </ligand>
</feature>
<feature type="binding site" evidence="1">
    <location>
        <position position="23"/>
    </location>
    <ligand>
        <name>3-amino-2-oxopropyl phosphate</name>
        <dbReference type="ChEBI" id="CHEBI:57279"/>
    </ligand>
</feature>
<feature type="binding site" evidence="1">
    <location>
        <position position="50"/>
    </location>
    <ligand>
        <name>1-deoxy-D-xylulose 5-phosphate</name>
        <dbReference type="ChEBI" id="CHEBI:57792"/>
    </ligand>
</feature>
<feature type="binding site" evidence="1">
    <location>
        <position position="55"/>
    </location>
    <ligand>
        <name>1-deoxy-D-xylulose 5-phosphate</name>
        <dbReference type="ChEBI" id="CHEBI:57792"/>
    </ligand>
</feature>
<feature type="binding site" evidence="1">
    <location>
        <position position="105"/>
    </location>
    <ligand>
        <name>1-deoxy-D-xylulose 5-phosphate</name>
        <dbReference type="ChEBI" id="CHEBI:57792"/>
    </ligand>
</feature>
<feature type="binding site" evidence="1">
    <location>
        <position position="200"/>
    </location>
    <ligand>
        <name>3-amino-2-oxopropyl phosphate</name>
        <dbReference type="ChEBI" id="CHEBI:57279"/>
    </ligand>
</feature>
<feature type="binding site" evidence="1">
    <location>
        <begin position="221"/>
        <end position="222"/>
    </location>
    <ligand>
        <name>3-amino-2-oxopropyl phosphate</name>
        <dbReference type="ChEBI" id="CHEBI:57279"/>
    </ligand>
</feature>
<feature type="site" description="Transition state stabilizer" evidence="1">
    <location>
        <position position="156"/>
    </location>
</feature>
<protein>
    <recommendedName>
        <fullName evidence="1">Pyridoxine 5'-phosphate synthase</fullName>
        <shortName evidence="1">PNP synthase</shortName>
        <ecNumber evidence="1">2.6.99.2</ecNumber>
    </recommendedName>
</protein>
<reference key="1">
    <citation type="submission" date="2007-02" db="EMBL/GenBank/DDBJ databases">
        <title>Complete sequence of chromosome 1 of Rhodobacter sphaeroides ATCC 17029.</title>
        <authorList>
            <person name="Copeland A."/>
            <person name="Lucas S."/>
            <person name="Lapidus A."/>
            <person name="Barry K."/>
            <person name="Detter J.C."/>
            <person name="Glavina del Rio T."/>
            <person name="Hammon N."/>
            <person name="Israni S."/>
            <person name="Dalin E."/>
            <person name="Tice H."/>
            <person name="Pitluck S."/>
            <person name="Kiss H."/>
            <person name="Brettin T."/>
            <person name="Bruce D."/>
            <person name="Han C."/>
            <person name="Tapia R."/>
            <person name="Gilna P."/>
            <person name="Schmutz J."/>
            <person name="Larimer F."/>
            <person name="Land M."/>
            <person name="Hauser L."/>
            <person name="Kyrpides N."/>
            <person name="Mikhailova N."/>
            <person name="Richardson P."/>
            <person name="Mackenzie C."/>
            <person name="Choudhary M."/>
            <person name="Donohue T.J."/>
            <person name="Kaplan S."/>
        </authorList>
    </citation>
    <scope>NUCLEOTIDE SEQUENCE [LARGE SCALE GENOMIC DNA]</scope>
    <source>
        <strain>ATCC 17029 / ATH 2.4.9</strain>
    </source>
</reference>
<keyword id="KW-0963">Cytoplasm</keyword>
<keyword id="KW-0664">Pyridoxine biosynthesis</keyword>
<keyword id="KW-0808">Transferase</keyword>
<evidence type="ECO:0000255" key="1">
    <source>
        <dbReference type="HAMAP-Rule" id="MF_00279"/>
    </source>
</evidence>
<proteinExistence type="inferred from homology"/>
<comment type="function">
    <text evidence="1">Catalyzes the complicated ring closure reaction between the two acyclic compounds 1-deoxy-D-xylulose-5-phosphate (DXP) and 3-amino-2-oxopropyl phosphate (1-amino-acetone-3-phosphate or AAP) to form pyridoxine 5'-phosphate (PNP) and inorganic phosphate.</text>
</comment>
<comment type="catalytic activity">
    <reaction evidence="1">
        <text>3-amino-2-oxopropyl phosphate + 1-deoxy-D-xylulose 5-phosphate = pyridoxine 5'-phosphate + phosphate + 2 H2O + H(+)</text>
        <dbReference type="Rhea" id="RHEA:15265"/>
        <dbReference type="ChEBI" id="CHEBI:15377"/>
        <dbReference type="ChEBI" id="CHEBI:15378"/>
        <dbReference type="ChEBI" id="CHEBI:43474"/>
        <dbReference type="ChEBI" id="CHEBI:57279"/>
        <dbReference type="ChEBI" id="CHEBI:57792"/>
        <dbReference type="ChEBI" id="CHEBI:58589"/>
        <dbReference type="EC" id="2.6.99.2"/>
    </reaction>
</comment>
<comment type="pathway">
    <text evidence="1">Cofactor biosynthesis; pyridoxine 5'-phosphate biosynthesis; pyridoxine 5'-phosphate from D-erythrose 4-phosphate: step 5/5.</text>
</comment>
<comment type="subunit">
    <text evidence="1">Homooctamer; tetramer of dimers.</text>
</comment>
<comment type="subcellular location">
    <subcellularLocation>
        <location evidence="1">Cytoplasm</location>
    </subcellularLocation>
</comment>
<comment type="similarity">
    <text evidence="1">Belongs to the PNP synthase family.</text>
</comment>
<dbReference type="EC" id="2.6.99.2" evidence="1"/>
<dbReference type="EMBL" id="CP000577">
    <property type="protein sequence ID" value="ABN75421.1"/>
    <property type="molecule type" value="Genomic_DNA"/>
</dbReference>
<dbReference type="RefSeq" id="WP_002722415.1">
    <property type="nucleotide sequence ID" value="NC_009049.1"/>
</dbReference>
<dbReference type="SMR" id="A3PGF5"/>
<dbReference type="GeneID" id="67448432"/>
<dbReference type="KEGG" id="rsh:Rsph17029_0305"/>
<dbReference type="HOGENOM" id="CLU_074563_0_0_5"/>
<dbReference type="UniPathway" id="UPA00244">
    <property type="reaction ID" value="UER00313"/>
</dbReference>
<dbReference type="GO" id="GO:0005829">
    <property type="term" value="C:cytosol"/>
    <property type="evidence" value="ECO:0007669"/>
    <property type="project" value="TreeGrafter"/>
</dbReference>
<dbReference type="GO" id="GO:0033856">
    <property type="term" value="F:pyridoxine 5'-phosphate synthase activity"/>
    <property type="evidence" value="ECO:0007669"/>
    <property type="project" value="UniProtKB-EC"/>
</dbReference>
<dbReference type="GO" id="GO:0008615">
    <property type="term" value="P:pyridoxine biosynthetic process"/>
    <property type="evidence" value="ECO:0007669"/>
    <property type="project" value="UniProtKB-UniRule"/>
</dbReference>
<dbReference type="CDD" id="cd00003">
    <property type="entry name" value="PNPsynthase"/>
    <property type="match status" value="1"/>
</dbReference>
<dbReference type="Gene3D" id="3.20.20.70">
    <property type="entry name" value="Aldolase class I"/>
    <property type="match status" value="1"/>
</dbReference>
<dbReference type="HAMAP" id="MF_00279">
    <property type="entry name" value="PdxJ"/>
    <property type="match status" value="1"/>
</dbReference>
<dbReference type="InterPro" id="IPR013785">
    <property type="entry name" value="Aldolase_TIM"/>
</dbReference>
<dbReference type="InterPro" id="IPR004569">
    <property type="entry name" value="PyrdxlP_synth_PdxJ"/>
</dbReference>
<dbReference type="InterPro" id="IPR036130">
    <property type="entry name" value="Pyridoxine-5'_phos_synth"/>
</dbReference>
<dbReference type="NCBIfam" id="TIGR00559">
    <property type="entry name" value="pdxJ"/>
    <property type="match status" value="1"/>
</dbReference>
<dbReference type="NCBIfam" id="NF003624">
    <property type="entry name" value="PRK05265.1-2"/>
    <property type="match status" value="1"/>
</dbReference>
<dbReference type="NCBIfam" id="NF003625">
    <property type="entry name" value="PRK05265.1-3"/>
    <property type="match status" value="1"/>
</dbReference>
<dbReference type="NCBIfam" id="NF003627">
    <property type="entry name" value="PRK05265.1-5"/>
    <property type="match status" value="1"/>
</dbReference>
<dbReference type="PANTHER" id="PTHR30456">
    <property type="entry name" value="PYRIDOXINE 5'-PHOSPHATE SYNTHASE"/>
    <property type="match status" value="1"/>
</dbReference>
<dbReference type="PANTHER" id="PTHR30456:SF0">
    <property type="entry name" value="PYRIDOXINE 5'-PHOSPHATE SYNTHASE"/>
    <property type="match status" value="1"/>
</dbReference>
<dbReference type="Pfam" id="PF03740">
    <property type="entry name" value="PdxJ"/>
    <property type="match status" value="1"/>
</dbReference>
<dbReference type="SUPFAM" id="SSF63892">
    <property type="entry name" value="Pyridoxine 5'-phosphate synthase"/>
    <property type="match status" value="1"/>
</dbReference>
<name>PDXJ_CERS1</name>
<accession>A3PGF5</accession>
<gene>
    <name evidence="1" type="primary">pdxJ</name>
    <name type="ordered locus">Rsph17029_0305</name>
</gene>